<dbReference type="EMBL" id="CP000926">
    <property type="protein sequence ID" value="ABZ00420.1"/>
    <property type="molecule type" value="Genomic_DNA"/>
</dbReference>
<dbReference type="RefSeq" id="WP_003260797.1">
    <property type="nucleotide sequence ID" value="NC_010322.1"/>
</dbReference>
<dbReference type="SMR" id="B0KFU7"/>
<dbReference type="GeneID" id="97169895"/>
<dbReference type="KEGG" id="ppg:PputGB1_4533"/>
<dbReference type="eggNOG" id="COG0103">
    <property type="taxonomic scope" value="Bacteria"/>
</dbReference>
<dbReference type="HOGENOM" id="CLU_046483_2_1_6"/>
<dbReference type="Proteomes" id="UP000002157">
    <property type="component" value="Chromosome"/>
</dbReference>
<dbReference type="GO" id="GO:0022627">
    <property type="term" value="C:cytosolic small ribosomal subunit"/>
    <property type="evidence" value="ECO:0007669"/>
    <property type="project" value="TreeGrafter"/>
</dbReference>
<dbReference type="GO" id="GO:0003723">
    <property type="term" value="F:RNA binding"/>
    <property type="evidence" value="ECO:0007669"/>
    <property type="project" value="TreeGrafter"/>
</dbReference>
<dbReference type="GO" id="GO:0003735">
    <property type="term" value="F:structural constituent of ribosome"/>
    <property type="evidence" value="ECO:0007669"/>
    <property type="project" value="InterPro"/>
</dbReference>
<dbReference type="GO" id="GO:0006412">
    <property type="term" value="P:translation"/>
    <property type="evidence" value="ECO:0007669"/>
    <property type="project" value="UniProtKB-UniRule"/>
</dbReference>
<dbReference type="FunFam" id="3.30.230.10:FF:000001">
    <property type="entry name" value="30S ribosomal protein S9"/>
    <property type="match status" value="1"/>
</dbReference>
<dbReference type="Gene3D" id="3.30.230.10">
    <property type="match status" value="1"/>
</dbReference>
<dbReference type="HAMAP" id="MF_00532_B">
    <property type="entry name" value="Ribosomal_uS9_B"/>
    <property type="match status" value="1"/>
</dbReference>
<dbReference type="InterPro" id="IPR020568">
    <property type="entry name" value="Ribosomal_Su5_D2-typ_SF"/>
</dbReference>
<dbReference type="InterPro" id="IPR000754">
    <property type="entry name" value="Ribosomal_uS9"/>
</dbReference>
<dbReference type="InterPro" id="IPR023035">
    <property type="entry name" value="Ribosomal_uS9_bac/plastid"/>
</dbReference>
<dbReference type="InterPro" id="IPR020574">
    <property type="entry name" value="Ribosomal_uS9_CS"/>
</dbReference>
<dbReference type="InterPro" id="IPR014721">
    <property type="entry name" value="Ribsml_uS5_D2-typ_fold_subgr"/>
</dbReference>
<dbReference type="NCBIfam" id="NF001099">
    <property type="entry name" value="PRK00132.1"/>
    <property type="match status" value="1"/>
</dbReference>
<dbReference type="PANTHER" id="PTHR21569">
    <property type="entry name" value="RIBOSOMAL PROTEIN S9"/>
    <property type="match status" value="1"/>
</dbReference>
<dbReference type="PANTHER" id="PTHR21569:SF1">
    <property type="entry name" value="SMALL RIBOSOMAL SUBUNIT PROTEIN US9M"/>
    <property type="match status" value="1"/>
</dbReference>
<dbReference type="Pfam" id="PF00380">
    <property type="entry name" value="Ribosomal_S9"/>
    <property type="match status" value="1"/>
</dbReference>
<dbReference type="SUPFAM" id="SSF54211">
    <property type="entry name" value="Ribosomal protein S5 domain 2-like"/>
    <property type="match status" value="1"/>
</dbReference>
<dbReference type="PROSITE" id="PS00360">
    <property type="entry name" value="RIBOSOMAL_S9"/>
    <property type="match status" value="1"/>
</dbReference>
<reference key="1">
    <citation type="submission" date="2008-01" db="EMBL/GenBank/DDBJ databases">
        <title>Complete sequence of Pseudomonas putida GB-1.</title>
        <authorList>
            <consortium name="US DOE Joint Genome Institute"/>
            <person name="Copeland A."/>
            <person name="Lucas S."/>
            <person name="Lapidus A."/>
            <person name="Barry K."/>
            <person name="Glavina del Rio T."/>
            <person name="Dalin E."/>
            <person name="Tice H."/>
            <person name="Pitluck S."/>
            <person name="Bruce D."/>
            <person name="Goodwin L."/>
            <person name="Chertkov O."/>
            <person name="Brettin T."/>
            <person name="Detter J.C."/>
            <person name="Han C."/>
            <person name="Kuske C.R."/>
            <person name="Schmutz J."/>
            <person name="Larimer F."/>
            <person name="Land M."/>
            <person name="Hauser L."/>
            <person name="Kyrpides N."/>
            <person name="Kim E."/>
            <person name="McCarthy J.K."/>
            <person name="Richardson P."/>
        </authorList>
    </citation>
    <scope>NUCLEOTIDE SEQUENCE [LARGE SCALE GENOMIC DNA]</scope>
    <source>
        <strain>GB-1</strain>
    </source>
</reference>
<evidence type="ECO:0000255" key="1">
    <source>
        <dbReference type="HAMAP-Rule" id="MF_00532"/>
    </source>
</evidence>
<evidence type="ECO:0000305" key="2"/>
<protein>
    <recommendedName>
        <fullName evidence="1">Small ribosomal subunit protein uS9</fullName>
    </recommendedName>
    <alternativeName>
        <fullName evidence="2">30S ribosomal protein S9</fullName>
    </alternativeName>
</protein>
<feature type="chain" id="PRO_1000081826" description="Small ribosomal subunit protein uS9">
    <location>
        <begin position="1"/>
        <end position="130"/>
    </location>
</feature>
<comment type="similarity">
    <text evidence="1">Belongs to the universal ribosomal protein uS9 family.</text>
</comment>
<sequence length="130" mass="14606">MSATQNYGTGRRKTATARVFLRPGTGNISINNRSLDVFFGRETARMVVRQPLELTETVEKFDIYVTVSGGGVSGQAGAIRHGITRALMEYDETLRGALRRAGYVTRDAREVERKKVGLRKARKRPQYSKR</sequence>
<gene>
    <name evidence="1" type="primary">rpsI</name>
    <name type="ordered locus">PputGB1_4533</name>
</gene>
<proteinExistence type="inferred from homology"/>
<organism>
    <name type="scientific">Pseudomonas putida (strain GB-1)</name>
    <dbReference type="NCBI Taxonomy" id="76869"/>
    <lineage>
        <taxon>Bacteria</taxon>
        <taxon>Pseudomonadati</taxon>
        <taxon>Pseudomonadota</taxon>
        <taxon>Gammaproteobacteria</taxon>
        <taxon>Pseudomonadales</taxon>
        <taxon>Pseudomonadaceae</taxon>
        <taxon>Pseudomonas</taxon>
    </lineage>
</organism>
<keyword id="KW-0687">Ribonucleoprotein</keyword>
<keyword id="KW-0689">Ribosomal protein</keyword>
<name>RS9_PSEPG</name>
<accession>B0KFU7</accession>